<sequence>MSDKLPYKVADIGLAAWGRKALDIAENEMPGLMRMRERYSASKPLKGARIAGCLHMTVETAVLIETLVTLGAEVQWSSCNIFSTQDHAAAAIAKAGIPVYAWKGETDEEYLWCIEQTLYFKDGPLNMILDDGGDLTNLIHTKYPQLLPGIRGISEETTTGVHNLYKMMANGILKVPAINVNDSVTKSKFDNLYGCRESLIDGIKRATDVMIAGKVAVVAGYGDVGKGCAQALRGFGARVIITEIDPINALQAAMEGYEVTTMDEACQEGNIFVTTTGCIDIILGRHFEQMKDDAIVCNIGHFDVEIDVKWLNENAVEKVNIKPQVDRYRLKNGRRIILLAEGRLVNLGCAMGHPSFVMSNSFTNQVMAQIELWTHPDKYPVGVHFLPKKLDEAVAEAHLGKLNVKLTKLTEKQAQYLGMSCDGPFKPDHYRY</sequence>
<gene>
    <name type="primary">AHCY</name>
    <name type="synonym">SAHH</name>
</gene>
<protein>
    <recommendedName>
        <fullName>Adenosylhomocysteinase</fullName>
        <shortName>AdoHcyase</shortName>
        <ecNumber evidence="3">3.13.2.1</ecNumber>
    </recommendedName>
    <alternativeName>
        <fullName>S-adenosyl-L-homocysteine hydrolase</fullName>
    </alternativeName>
</protein>
<proteinExistence type="evidence at protein level"/>
<feature type="initiator methionine" description="Removed" evidence="18 20">
    <location>
        <position position="1"/>
    </location>
</feature>
<feature type="chain" id="PRO_0000116902" description="Adenosylhomocysteinase">
    <location>
        <begin position="2"/>
        <end position="432"/>
    </location>
</feature>
<feature type="binding site" evidence="1">
    <location>
        <position position="57"/>
    </location>
    <ligand>
        <name>substrate</name>
    </ligand>
</feature>
<feature type="binding site" evidence="1">
    <location>
        <position position="131"/>
    </location>
    <ligand>
        <name>substrate</name>
    </ligand>
</feature>
<feature type="binding site" evidence="1">
    <location>
        <position position="156"/>
    </location>
    <ligand>
        <name>substrate</name>
    </ligand>
</feature>
<feature type="binding site" evidence="4 19">
    <location>
        <begin position="157"/>
        <end position="159"/>
    </location>
    <ligand>
        <name>NAD(+)</name>
        <dbReference type="ChEBI" id="CHEBI:57540"/>
    </ligand>
</feature>
<feature type="binding site" evidence="1">
    <location>
        <position position="186"/>
    </location>
    <ligand>
        <name>substrate</name>
    </ligand>
</feature>
<feature type="binding site" evidence="1">
    <location>
        <position position="190"/>
    </location>
    <ligand>
        <name>substrate</name>
    </ligand>
</feature>
<feature type="binding site" evidence="4 19">
    <location>
        <begin position="222"/>
        <end position="227"/>
    </location>
    <ligand>
        <name>NAD(+)</name>
        <dbReference type="ChEBI" id="CHEBI:57540"/>
    </ligand>
</feature>
<feature type="binding site" evidence="4 19">
    <location>
        <position position="243"/>
    </location>
    <ligand>
        <name>NAD(+)</name>
        <dbReference type="ChEBI" id="CHEBI:57540"/>
    </ligand>
</feature>
<feature type="binding site" evidence="4 19">
    <location>
        <position position="248"/>
    </location>
    <ligand>
        <name>NAD(+)</name>
        <dbReference type="ChEBI" id="CHEBI:57540"/>
    </ligand>
</feature>
<feature type="binding site" evidence="4 19">
    <location>
        <begin position="299"/>
        <end position="301"/>
    </location>
    <ligand>
        <name>NAD(+)</name>
        <dbReference type="ChEBI" id="CHEBI:57540"/>
    </ligand>
</feature>
<feature type="binding site" evidence="4 19">
    <location>
        <position position="346"/>
    </location>
    <ligand>
        <name>NAD(+)</name>
        <dbReference type="ChEBI" id="CHEBI:57540"/>
    </ligand>
</feature>
<feature type="binding site" evidence="4 19">
    <location>
        <position position="353"/>
    </location>
    <ligand>
        <name>NAD(+)</name>
        <dbReference type="ChEBI" id="CHEBI:57540"/>
    </ligand>
</feature>
<feature type="modified residue" description="N-acetylserine" evidence="20">
    <location>
        <position position="2"/>
    </location>
</feature>
<feature type="modified residue" description="Phosphoserine" evidence="24">
    <location>
        <position position="183"/>
    </location>
</feature>
<feature type="modified residue" description="N6-(2-hydroxyisobutyryl)lysine" evidence="17">
    <location>
        <position position="186"/>
    </location>
</feature>
<feature type="modified residue" description="Phosphotyrosine" evidence="2">
    <location>
        <position position="193"/>
    </location>
</feature>
<feature type="splice variant" id="VSP_045404" description="In isoform 2." evidence="21">
    <location>
        <begin position="1"/>
        <end position="28"/>
    </location>
</feature>
<feature type="sequence variant" id="VAR_052286" description="In dbSNP:rs13043752." evidence="6">
    <original>R</original>
    <variation>W</variation>
    <location>
        <position position="38"/>
    </location>
</feature>
<feature type="sequence variant" id="VAR_058588" description="In HMAHCHD; severely decreased adenosylhomocysteinase activity measured under reducing conditions; affects protein self-interaction and is able to form tetramers only under reducing conditions; does not affect nuclear-cytoplasmic protein distribution; dbSNP:rs369428934." evidence="11 12 13 16">
    <original>R</original>
    <variation>C</variation>
    <location>
        <position position="49"/>
    </location>
</feature>
<feature type="sequence variant" id="VAR_087996" description="In HMAHCHD; affects nuclear-cytoplasmic protein distribution resulting in increased protein amount in the nucleus; results in protein aggregation and formation of inclusion bodies." evidence="13 16">
    <original>G</original>
    <variation>S</variation>
    <location>
        <position position="71"/>
    </location>
</feature>
<feature type="sequence variant" id="VAR_058589" description="In HMAHCHD; results in high molecular weight protein aggregates; severely decreased function in homocysteine synthesis; affects nuclear-cytoplasmic protein distribution resulting in slightly decreased protein amount in the nucleus; dbSNP:rs773162208." evidence="11 12 16">
    <original>D</original>
    <variation>G</variation>
    <location>
        <position position="86"/>
    </location>
</feature>
<feature type="sequence variant" id="VAR_006934" evidence="14">
    <original>D</original>
    <variation>N</variation>
    <location>
        <position position="86"/>
    </location>
</feature>
<feature type="sequence variant" id="VAR_058590" description="In HMAHCHD; affects nuclear-cytoplasmic protein distribution resulting in increased protein amount in the nucleus; severely decreased adenosylhomocysteinase activity; reduced thermal stability; dbSNP:rs755222515." evidence="7 10 16">
    <original>A</original>
    <variation>V</variation>
    <location>
        <position position="89"/>
    </location>
</feature>
<feature type="sequence variant" id="VAR_087997" description="In HMAHCHD; loss of adenosylhomocysteinase activity." evidence="5 8">
    <location>
        <begin position="112"/>
        <end position="432"/>
    </location>
</feature>
<feature type="sequence variant" id="VAR_058591" description="In HMAHCHD; affects nuclear-cytoplasmic protein distribution resulting in increased protein amount in the nucleus; reduced thermal stability; decreased adenosylhomocysteinase activity; dbSNP:rs121918608." evidence="5 7 8 15 16">
    <original>Y</original>
    <variation>C</variation>
    <location>
        <position position="143"/>
    </location>
</feature>
<feature type="sequence variant" id="VAR_087998" description="In HMAHCHD; reduced tetramerization; affects nuclear-cytoplasmic protein distribution resulting in increased protein amount in the nucleus; dbSNP:rs748855369." evidence="15 16">
    <original>Y</original>
    <variation>D</variation>
    <location>
        <position position="328"/>
    </location>
</feature>
<feature type="mutagenesis site" description="Affects nuclear-cytoplasmic protein distribution resulting in increased protein amount in the nucleus." evidence="16">
    <location>
        <begin position="1"/>
        <end position="127"/>
    </location>
</feature>
<feature type="mutagenesis site" description="Does not affect nuclear-cytoplasmic protein distribution resulting in subcellular localization similar to the wild-type protein." evidence="16">
    <original>Y</original>
    <variation>F</variation>
    <location>
        <position position="7"/>
    </location>
</feature>
<feature type="mutagenesis site" description="Severely decreased adenosylhomocysteinase activity." evidence="10">
    <original>T</original>
    <variation>A</variation>
    <location>
        <position position="84"/>
    </location>
</feature>
<feature type="mutagenesis site" description="Decreased adenosylhomocysteinase activity; when associated with V-89." evidence="10">
    <original>T</original>
    <variation>S</variation>
    <location>
        <position position="84"/>
    </location>
</feature>
<feature type="mutagenesis site" description="No effect on adenosylhomocysteinase activity." evidence="10">
    <original>T</original>
    <variation>S</variation>
    <location>
        <position position="84"/>
    </location>
</feature>
<feature type="mutagenesis site" description="Decreased adenosylhomocysteinase activity; when associated with S-84." evidence="10">
    <original>A</original>
    <variation>V</variation>
    <location>
        <position position="89"/>
    </location>
</feature>
<feature type="mutagenesis site" description="Slightly reduced adenosylhomocysteinase activity." evidence="8">
    <original>E</original>
    <variation>L</variation>
    <location>
        <position position="115"/>
    </location>
</feature>
<feature type="mutagenesis site" description="Affects nuclear-cytoplasmic protein distribution resulting in increased protein amount in the nucleus." evidence="16">
    <location>
        <begin position="365"/>
        <end position="432"/>
    </location>
</feature>
<feature type="sequence conflict" description="In Ref. 3; BAG53495." evidence="22" ref="3">
    <original>A</original>
    <variation>V</variation>
    <location>
        <position position="249"/>
    </location>
</feature>
<feature type="strand" evidence="25">
    <location>
        <begin position="8"/>
        <end position="10"/>
    </location>
</feature>
<feature type="helix" evidence="25">
    <location>
        <begin position="12"/>
        <end position="14"/>
    </location>
</feature>
<feature type="helix" evidence="25">
    <location>
        <begin position="15"/>
        <end position="26"/>
    </location>
</feature>
<feature type="helix" evidence="25">
    <location>
        <begin position="30"/>
        <end position="39"/>
    </location>
</feature>
<feature type="turn" evidence="25">
    <location>
        <begin position="40"/>
        <end position="42"/>
    </location>
</feature>
<feature type="turn" evidence="25">
    <location>
        <begin position="44"/>
        <end position="47"/>
    </location>
</feature>
<feature type="strand" evidence="25">
    <location>
        <begin position="49"/>
        <end position="54"/>
    </location>
</feature>
<feature type="helix" evidence="25">
    <location>
        <begin position="58"/>
        <end position="69"/>
    </location>
</feature>
<feature type="strand" evidence="25">
    <location>
        <begin position="73"/>
        <end position="77"/>
    </location>
</feature>
<feature type="strand" evidence="27">
    <location>
        <begin position="79"/>
        <end position="82"/>
    </location>
</feature>
<feature type="helix" evidence="25">
    <location>
        <begin position="86"/>
        <end position="94"/>
    </location>
</feature>
<feature type="strand" evidence="25">
    <location>
        <begin position="99"/>
        <end position="101"/>
    </location>
</feature>
<feature type="helix" evidence="25">
    <location>
        <begin position="107"/>
        <end position="115"/>
    </location>
</feature>
<feature type="strand" evidence="25">
    <location>
        <begin position="118"/>
        <end position="120"/>
    </location>
</feature>
<feature type="strand" evidence="27">
    <location>
        <begin position="121"/>
        <end position="124"/>
    </location>
</feature>
<feature type="strand" evidence="25">
    <location>
        <begin position="126"/>
        <end position="133"/>
    </location>
</feature>
<feature type="helix" evidence="25">
    <location>
        <begin position="134"/>
        <end position="142"/>
    </location>
</feature>
<feature type="helix" evidence="25">
    <location>
        <begin position="144"/>
        <end position="149"/>
    </location>
</feature>
<feature type="strand" evidence="25">
    <location>
        <begin position="152"/>
        <end position="155"/>
    </location>
</feature>
<feature type="helix" evidence="25">
    <location>
        <begin position="158"/>
        <end position="169"/>
    </location>
</feature>
<feature type="strand" evidence="25">
    <location>
        <begin position="175"/>
        <end position="179"/>
    </location>
</feature>
<feature type="helix" evidence="25">
    <location>
        <begin position="184"/>
        <end position="187"/>
    </location>
</feature>
<feature type="helix" evidence="25">
    <location>
        <begin position="190"/>
        <end position="207"/>
    </location>
</feature>
<feature type="strand" evidence="25">
    <location>
        <begin position="215"/>
        <end position="219"/>
    </location>
</feature>
<feature type="helix" evidence="25">
    <location>
        <begin position="223"/>
        <end position="234"/>
    </location>
</feature>
<feature type="strand" evidence="25">
    <location>
        <begin position="238"/>
        <end position="242"/>
    </location>
</feature>
<feature type="helix" evidence="25">
    <location>
        <begin position="246"/>
        <end position="254"/>
    </location>
</feature>
<feature type="helix" evidence="25">
    <location>
        <begin position="262"/>
        <end position="265"/>
    </location>
</feature>
<feature type="turn" evidence="25">
    <location>
        <begin position="266"/>
        <end position="268"/>
    </location>
</feature>
<feature type="strand" evidence="25">
    <location>
        <begin position="270"/>
        <end position="274"/>
    </location>
</feature>
<feature type="strand" evidence="26">
    <location>
        <begin position="277"/>
        <end position="279"/>
    </location>
</feature>
<feature type="helix" evidence="25">
    <location>
        <begin position="284"/>
        <end position="287"/>
    </location>
</feature>
<feature type="strand" evidence="25">
    <location>
        <begin position="294"/>
        <end position="298"/>
    </location>
</feature>
<feature type="strand" evidence="25">
    <location>
        <begin position="300"/>
        <end position="302"/>
    </location>
</feature>
<feature type="helix" evidence="25">
    <location>
        <begin position="308"/>
        <end position="314"/>
    </location>
</feature>
<feature type="strand" evidence="25">
    <location>
        <begin position="316"/>
        <end position="322"/>
    </location>
</feature>
<feature type="strand" evidence="25">
    <location>
        <begin position="325"/>
        <end position="329"/>
    </location>
</feature>
<feature type="strand" evidence="25">
    <location>
        <begin position="335"/>
        <end position="339"/>
    </location>
</feature>
<feature type="helix" evidence="25">
    <location>
        <begin position="340"/>
        <end position="342"/>
    </location>
</feature>
<feature type="helix" evidence="25">
    <location>
        <begin position="345"/>
        <end position="348"/>
    </location>
</feature>
<feature type="helix" evidence="25">
    <location>
        <begin position="355"/>
        <end position="374"/>
    </location>
</feature>
<feature type="helix" evidence="25">
    <location>
        <begin position="376"/>
        <end position="378"/>
    </location>
</feature>
<feature type="strand" evidence="25">
    <location>
        <begin position="381"/>
        <end position="384"/>
    </location>
</feature>
<feature type="helix" evidence="25">
    <location>
        <begin position="388"/>
        <end position="399"/>
    </location>
</feature>
<feature type="turn" evidence="25">
    <location>
        <begin position="400"/>
        <end position="403"/>
    </location>
</feature>
<feature type="helix" evidence="25">
    <location>
        <begin position="411"/>
        <end position="417"/>
    </location>
</feature>
<feature type="strand" evidence="26">
    <location>
        <begin position="421"/>
        <end position="423"/>
    </location>
</feature>
<keyword id="KW-0002">3D-structure</keyword>
<keyword id="KW-0007">Acetylation</keyword>
<keyword id="KW-0025">Alternative splicing</keyword>
<keyword id="KW-0186">Copper</keyword>
<keyword id="KW-0963">Cytoplasm</keyword>
<keyword id="KW-0903">Direct protein sequencing</keyword>
<keyword id="KW-0225">Disease variant</keyword>
<keyword id="KW-0256">Endoplasmic reticulum</keyword>
<keyword id="KW-0378">Hydrolase</keyword>
<keyword id="KW-0379">Hydroxylation</keyword>
<keyword id="KW-0520">NAD</keyword>
<keyword id="KW-0539">Nucleus</keyword>
<keyword id="KW-0554">One-carbon metabolism</keyword>
<keyword id="KW-0597">Phosphoprotein</keyword>
<keyword id="KW-1267">Proteomics identification</keyword>
<keyword id="KW-1185">Reference proteome</keyword>
<dbReference type="EC" id="3.13.2.1" evidence="3"/>
<dbReference type="EMBL" id="M61831">
    <property type="protein sequence ID" value="AAA51681.1"/>
    <property type="molecule type" value="mRNA"/>
</dbReference>
<dbReference type="EMBL" id="M61832">
    <property type="protein sequence ID" value="AAA51682.1"/>
    <property type="molecule type" value="mRNA"/>
</dbReference>
<dbReference type="EMBL" id="BT006697">
    <property type="protein sequence ID" value="AAP35343.1"/>
    <property type="molecule type" value="mRNA"/>
</dbReference>
<dbReference type="EMBL" id="AK097610">
    <property type="protein sequence ID" value="BAG53495.1"/>
    <property type="molecule type" value="mRNA"/>
</dbReference>
<dbReference type="EMBL" id="AK290422">
    <property type="protein sequence ID" value="BAF83111.1"/>
    <property type="molecule type" value="mRNA"/>
</dbReference>
<dbReference type="EMBL" id="AL356299">
    <property type="status" value="NOT_ANNOTATED_CDS"/>
    <property type="molecule type" value="Genomic_DNA"/>
</dbReference>
<dbReference type="EMBL" id="CH471077">
    <property type="protein sequence ID" value="EAW76279.1"/>
    <property type="molecule type" value="Genomic_DNA"/>
</dbReference>
<dbReference type="EMBL" id="CH471077">
    <property type="protein sequence ID" value="EAW76280.1"/>
    <property type="molecule type" value="Genomic_DNA"/>
</dbReference>
<dbReference type="EMBL" id="BC010018">
    <property type="protein sequence ID" value="AAH10018.1"/>
    <property type="molecule type" value="mRNA"/>
</dbReference>
<dbReference type="EMBL" id="BC011606">
    <property type="protein sequence ID" value="AAH11606.1"/>
    <property type="molecule type" value="mRNA"/>
</dbReference>
<dbReference type="CCDS" id="CCDS13233.1">
    <molecule id="P23526-1"/>
</dbReference>
<dbReference type="CCDS" id="CCDS54457.1">
    <molecule id="P23526-2"/>
</dbReference>
<dbReference type="PIR" id="A43629">
    <property type="entry name" value="A43629"/>
</dbReference>
<dbReference type="RefSeq" id="NP_000678.1">
    <molecule id="P23526-1"/>
    <property type="nucleotide sequence ID" value="NM_000687.4"/>
</dbReference>
<dbReference type="RefSeq" id="NP_001155238.1">
    <molecule id="P23526-2"/>
    <property type="nucleotide sequence ID" value="NM_001161766.2"/>
</dbReference>
<dbReference type="RefSeq" id="NP_001309013.1">
    <molecule id="P23526-2"/>
    <property type="nucleotide sequence ID" value="NM_001322084.2"/>
</dbReference>
<dbReference type="RefSeq" id="NP_001309014.1">
    <molecule id="P23526-2"/>
    <property type="nucleotide sequence ID" value="NM_001322085.2"/>
</dbReference>
<dbReference type="RefSeq" id="NP_001349679.1">
    <molecule id="P23526-1"/>
    <property type="nucleotide sequence ID" value="NM_001362750.2"/>
</dbReference>
<dbReference type="RefSeq" id="XP_005260374.1">
    <property type="nucleotide sequence ID" value="XM_005260317.2"/>
</dbReference>
<dbReference type="RefSeq" id="XP_011526961.1">
    <molecule id="P23526-2"/>
    <property type="nucleotide sequence ID" value="XM_011528659.2"/>
</dbReference>
<dbReference type="RefSeq" id="XP_016883197.1">
    <property type="nucleotide sequence ID" value="XM_017027708.1"/>
</dbReference>
<dbReference type="RefSeq" id="XP_016883198.1">
    <molecule id="P23526-1"/>
    <property type="nucleotide sequence ID" value="XM_017027709.3"/>
</dbReference>
<dbReference type="RefSeq" id="XP_047295918.1">
    <molecule id="P23526-1"/>
    <property type="nucleotide sequence ID" value="XM_047439962.1"/>
</dbReference>
<dbReference type="RefSeq" id="XP_054179113.1">
    <molecule id="P23526-1"/>
    <property type="nucleotide sequence ID" value="XM_054323138.1"/>
</dbReference>
<dbReference type="RefSeq" id="XP_054179114.1">
    <molecule id="P23526-1"/>
    <property type="nucleotide sequence ID" value="XM_054323139.1"/>
</dbReference>
<dbReference type="RefSeq" id="XP_054179115.1">
    <molecule id="P23526-2"/>
    <property type="nucleotide sequence ID" value="XM_054323140.1"/>
</dbReference>
<dbReference type="PDB" id="1A7A">
    <property type="method" value="X-ray"/>
    <property type="resolution" value="2.80 A"/>
    <property type="chains" value="A/B=1-432"/>
</dbReference>
<dbReference type="PDB" id="1LI4">
    <property type="method" value="X-ray"/>
    <property type="resolution" value="2.01 A"/>
    <property type="chains" value="A=1-432"/>
</dbReference>
<dbReference type="PDB" id="3NJ4">
    <property type="method" value="X-ray"/>
    <property type="resolution" value="2.50 A"/>
    <property type="chains" value="A/B/C/D=1-432"/>
</dbReference>
<dbReference type="PDB" id="4PFJ">
    <property type="method" value="X-ray"/>
    <property type="resolution" value="2.30 A"/>
    <property type="chains" value="A/B=1-432"/>
</dbReference>
<dbReference type="PDB" id="4PGF">
    <property type="method" value="X-ray"/>
    <property type="resolution" value="2.59 A"/>
    <property type="chains" value="A/B=1-432"/>
</dbReference>
<dbReference type="PDB" id="4YVF">
    <property type="method" value="X-ray"/>
    <property type="resolution" value="2.70 A"/>
    <property type="chains" value="A/B=1-432"/>
</dbReference>
<dbReference type="PDB" id="5W49">
    <property type="method" value="X-ray"/>
    <property type="resolution" value="2.40 A"/>
    <property type="chains" value="A/B=4-432"/>
</dbReference>
<dbReference type="PDB" id="5W4B">
    <property type="method" value="X-ray"/>
    <property type="resolution" value="2.65 A"/>
    <property type="chains" value="A/B/C/D/E/F=4-432"/>
</dbReference>
<dbReference type="PDBsum" id="1A7A"/>
<dbReference type="PDBsum" id="1LI4"/>
<dbReference type="PDBsum" id="3NJ4"/>
<dbReference type="PDBsum" id="4PFJ"/>
<dbReference type="PDBsum" id="4PGF"/>
<dbReference type="PDBsum" id="4YVF"/>
<dbReference type="PDBsum" id="5W49"/>
<dbReference type="PDBsum" id="5W4B"/>
<dbReference type="SMR" id="P23526"/>
<dbReference type="BioGRID" id="106696">
    <property type="interactions" value="308"/>
</dbReference>
<dbReference type="DIP" id="DIP-50557N"/>
<dbReference type="FunCoup" id="P23526">
    <property type="interactions" value="1323"/>
</dbReference>
<dbReference type="IntAct" id="P23526">
    <property type="interactions" value="74"/>
</dbReference>
<dbReference type="MINT" id="P23526"/>
<dbReference type="STRING" id="9606.ENSP00000217426"/>
<dbReference type="BindingDB" id="P23526"/>
<dbReference type="ChEMBL" id="CHEMBL2664"/>
<dbReference type="DrugBank" id="DB03216">
    <property type="generic name" value="(1'R,2'S)-9-(2-Hydroxy-3'-Keto-Cyclopenten-1-yl)Adenine"/>
</dbReference>
<dbReference type="DrugBank" id="DB03273">
    <property type="generic name" value="3'-Oxo-Adenosine"/>
</dbReference>
<dbReference type="DrugBank" id="DB09130">
    <property type="generic name" value="Copper"/>
</dbReference>
<dbReference type="DrugBank" id="DB03769">
    <property type="generic name" value="D-Eritadenine"/>
</dbReference>
<dbReference type="DrugCentral" id="P23526"/>
<dbReference type="GuidetoPHARMACOLOGY" id="1233"/>
<dbReference type="GlyGen" id="P23526">
    <property type="glycosylation" value="3 sites, 1 N-linked glycan (1 site), 1 O-linked glycan (2 sites)"/>
</dbReference>
<dbReference type="iPTMnet" id="P23526"/>
<dbReference type="MetOSite" id="P23526"/>
<dbReference type="PhosphoSitePlus" id="P23526"/>
<dbReference type="SwissPalm" id="P23526"/>
<dbReference type="BioMuta" id="AHCY"/>
<dbReference type="DMDM" id="20141702"/>
<dbReference type="REPRODUCTION-2DPAGE" id="IPI00012007"/>
<dbReference type="jPOST" id="P23526"/>
<dbReference type="MassIVE" id="P23526"/>
<dbReference type="PaxDb" id="9606-ENSP00000217426"/>
<dbReference type="PeptideAtlas" id="P23526"/>
<dbReference type="ProteomicsDB" id="27374"/>
<dbReference type="ProteomicsDB" id="54126">
    <molecule id="P23526-1"/>
</dbReference>
<dbReference type="Pumba" id="P23526"/>
<dbReference type="Antibodypedia" id="35085">
    <property type="antibodies" value="396 antibodies from 32 providers"/>
</dbReference>
<dbReference type="DNASU" id="191"/>
<dbReference type="Ensembl" id="ENST00000217426.7">
    <molecule id="P23526-1"/>
    <property type="protein sequence ID" value="ENSP00000217426.2"/>
    <property type="gene ID" value="ENSG00000101444.13"/>
</dbReference>
<dbReference type="Ensembl" id="ENST00000538132.1">
    <molecule id="P23526-2"/>
    <property type="protein sequence ID" value="ENSP00000442820.1"/>
    <property type="gene ID" value="ENSG00000101444.13"/>
</dbReference>
<dbReference type="GeneID" id="191"/>
<dbReference type="KEGG" id="hsa:191"/>
<dbReference type="MANE-Select" id="ENST00000217426.7">
    <property type="protein sequence ID" value="ENSP00000217426.2"/>
    <property type="RefSeq nucleotide sequence ID" value="NM_000687.4"/>
    <property type="RefSeq protein sequence ID" value="NP_000678.1"/>
</dbReference>
<dbReference type="UCSC" id="uc002xai.4">
    <molecule id="P23526-1"/>
    <property type="organism name" value="human"/>
</dbReference>
<dbReference type="AGR" id="HGNC:343"/>
<dbReference type="CTD" id="191"/>
<dbReference type="DisGeNET" id="191"/>
<dbReference type="GeneCards" id="AHCY"/>
<dbReference type="HGNC" id="HGNC:343">
    <property type="gene designation" value="AHCY"/>
</dbReference>
<dbReference type="HPA" id="ENSG00000101444">
    <property type="expression patterns" value="Low tissue specificity"/>
</dbReference>
<dbReference type="MalaCards" id="AHCY"/>
<dbReference type="MIM" id="180960">
    <property type="type" value="gene"/>
</dbReference>
<dbReference type="MIM" id="613752">
    <property type="type" value="phenotype"/>
</dbReference>
<dbReference type="neXtProt" id="NX_P23526"/>
<dbReference type="OpenTargets" id="ENSG00000101444"/>
<dbReference type="Orphanet" id="88618">
    <property type="disease" value="S-adenosylhomocysteine hydrolase deficiency"/>
</dbReference>
<dbReference type="PharmGKB" id="PA24636"/>
<dbReference type="VEuPathDB" id="HostDB:ENSG00000101444"/>
<dbReference type="eggNOG" id="KOG1370">
    <property type="taxonomic scope" value="Eukaryota"/>
</dbReference>
<dbReference type="GeneTree" id="ENSGT00950000182981"/>
<dbReference type="HOGENOM" id="CLU_025194_2_1_1"/>
<dbReference type="InParanoid" id="P23526"/>
<dbReference type="OMA" id="YIGVTVE"/>
<dbReference type="OrthoDB" id="10007170at2759"/>
<dbReference type="PAN-GO" id="P23526">
    <property type="GO annotations" value="3 GO annotations based on evolutionary models"/>
</dbReference>
<dbReference type="PhylomeDB" id="P23526"/>
<dbReference type="TreeFam" id="TF300415"/>
<dbReference type="BioCyc" id="MetaCyc:HS02273-MONOMER"/>
<dbReference type="BRENDA" id="3.3.1.1">
    <property type="organism ID" value="2681"/>
</dbReference>
<dbReference type="PathwayCommons" id="P23526"/>
<dbReference type="Reactome" id="R-HSA-156581">
    <property type="pathway name" value="Methylation"/>
</dbReference>
<dbReference type="Reactome" id="R-HSA-1614635">
    <property type="pathway name" value="Sulfur amino acid metabolism"/>
</dbReference>
<dbReference type="Reactome" id="R-HSA-2408508">
    <property type="pathway name" value="Metabolism of ingested SeMet, Sec, MeSec into H2Se"/>
</dbReference>
<dbReference type="Reactome" id="R-HSA-5578997">
    <property type="pathway name" value="Defective AHCY causes HMAHCHD"/>
</dbReference>
<dbReference type="SABIO-RK" id="P23526"/>
<dbReference type="SignaLink" id="P23526"/>
<dbReference type="UniPathway" id="UPA00314">
    <property type="reaction ID" value="UER00076"/>
</dbReference>
<dbReference type="BioGRID-ORCS" id="191">
    <property type="hits" value="523 hits in 1175 CRISPR screens"/>
</dbReference>
<dbReference type="CD-CODE" id="FB4E32DD">
    <property type="entry name" value="Presynaptic clusters and postsynaptic densities"/>
</dbReference>
<dbReference type="ChiTaRS" id="AHCY">
    <property type="organism name" value="human"/>
</dbReference>
<dbReference type="EvolutionaryTrace" id="P23526"/>
<dbReference type="GenomeRNAi" id="191"/>
<dbReference type="Pharos" id="P23526">
    <property type="development level" value="Tchem"/>
</dbReference>
<dbReference type="PRO" id="PR:P23526"/>
<dbReference type="Proteomes" id="UP000005640">
    <property type="component" value="Chromosome 20"/>
</dbReference>
<dbReference type="RNAct" id="P23526">
    <property type="molecule type" value="protein"/>
</dbReference>
<dbReference type="Bgee" id="ENSG00000101444">
    <property type="expression patterns" value="Expressed in lower esophagus mucosa and 100 other cell types or tissues"/>
</dbReference>
<dbReference type="ExpressionAtlas" id="P23526">
    <property type="expression patterns" value="baseline and differential"/>
</dbReference>
<dbReference type="GO" id="GO:0005829">
    <property type="term" value="C:cytosol"/>
    <property type="evidence" value="ECO:0000314"/>
    <property type="project" value="HPA"/>
</dbReference>
<dbReference type="GO" id="GO:0005783">
    <property type="term" value="C:endoplasmic reticulum"/>
    <property type="evidence" value="ECO:0007669"/>
    <property type="project" value="UniProtKB-SubCell"/>
</dbReference>
<dbReference type="GO" id="GO:0070062">
    <property type="term" value="C:extracellular exosome"/>
    <property type="evidence" value="ECO:0007005"/>
    <property type="project" value="UniProtKB"/>
</dbReference>
<dbReference type="GO" id="GO:0042470">
    <property type="term" value="C:melanosome"/>
    <property type="evidence" value="ECO:0007669"/>
    <property type="project" value="UniProtKB-SubCell"/>
</dbReference>
<dbReference type="GO" id="GO:0005634">
    <property type="term" value="C:nucleus"/>
    <property type="evidence" value="ECO:0007669"/>
    <property type="project" value="UniProtKB-SubCell"/>
</dbReference>
<dbReference type="GO" id="GO:0004013">
    <property type="term" value="F:adenosylhomocysteinase activity"/>
    <property type="evidence" value="ECO:0000314"/>
    <property type="project" value="UniProtKB"/>
</dbReference>
<dbReference type="GO" id="GO:0006730">
    <property type="term" value="P:one-carbon metabolic process"/>
    <property type="evidence" value="ECO:0007669"/>
    <property type="project" value="UniProtKB-KW"/>
</dbReference>
<dbReference type="GO" id="GO:0033353">
    <property type="term" value="P:S-adenosylmethionine cycle"/>
    <property type="evidence" value="ECO:0000318"/>
    <property type="project" value="GO_Central"/>
</dbReference>
<dbReference type="CDD" id="cd00401">
    <property type="entry name" value="SAHH"/>
    <property type="match status" value="1"/>
</dbReference>
<dbReference type="FunFam" id="3.40.50.1480:FF:000004">
    <property type="entry name" value="Adenosylhomocysteinase"/>
    <property type="match status" value="1"/>
</dbReference>
<dbReference type="FunFam" id="3.40.50.720:FF:000004">
    <property type="entry name" value="Adenosylhomocysteinase"/>
    <property type="match status" value="1"/>
</dbReference>
<dbReference type="Gene3D" id="3.40.50.1480">
    <property type="entry name" value="Adenosylhomocysteinase-like"/>
    <property type="match status" value="2"/>
</dbReference>
<dbReference type="Gene3D" id="3.40.50.720">
    <property type="entry name" value="NAD(P)-binding Rossmann-like Domain"/>
    <property type="match status" value="1"/>
</dbReference>
<dbReference type="HAMAP" id="MF_00563">
    <property type="entry name" value="AdoHcyase"/>
    <property type="match status" value="1"/>
</dbReference>
<dbReference type="InterPro" id="IPR042172">
    <property type="entry name" value="Adenosylhomocyst_ase-like_sf"/>
</dbReference>
<dbReference type="InterPro" id="IPR000043">
    <property type="entry name" value="Adenosylhomocysteinase-like"/>
</dbReference>
<dbReference type="InterPro" id="IPR015878">
    <property type="entry name" value="Ado_hCys_hydrolase_NAD-bd"/>
</dbReference>
<dbReference type="InterPro" id="IPR036291">
    <property type="entry name" value="NAD(P)-bd_dom_sf"/>
</dbReference>
<dbReference type="InterPro" id="IPR020082">
    <property type="entry name" value="S-Ado-L-homoCys_hydrolase_CS"/>
</dbReference>
<dbReference type="NCBIfam" id="TIGR00936">
    <property type="entry name" value="ahcY"/>
    <property type="match status" value="1"/>
</dbReference>
<dbReference type="NCBIfam" id="NF004005">
    <property type="entry name" value="PRK05476.2-3"/>
    <property type="match status" value="1"/>
</dbReference>
<dbReference type="PANTHER" id="PTHR23420">
    <property type="entry name" value="ADENOSYLHOMOCYSTEINASE"/>
    <property type="match status" value="1"/>
</dbReference>
<dbReference type="PANTHER" id="PTHR23420:SF17">
    <property type="entry name" value="ADENOSYLHOMOCYSTEINASE"/>
    <property type="match status" value="1"/>
</dbReference>
<dbReference type="Pfam" id="PF05221">
    <property type="entry name" value="AdoHcyase"/>
    <property type="match status" value="1"/>
</dbReference>
<dbReference type="Pfam" id="PF00670">
    <property type="entry name" value="AdoHcyase_NAD"/>
    <property type="match status" value="1"/>
</dbReference>
<dbReference type="PIRSF" id="PIRSF001109">
    <property type="entry name" value="Ad_hcy_hydrolase"/>
    <property type="match status" value="1"/>
</dbReference>
<dbReference type="SMART" id="SM00996">
    <property type="entry name" value="AdoHcyase"/>
    <property type="match status" value="1"/>
</dbReference>
<dbReference type="SMART" id="SM00997">
    <property type="entry name" value="AdoHcyase_NAD"/>
    <property type="match status" value="1"/>
</dbReference>
<dbReference type="SUPFAM" id="SSF52283">
    <property type="entry name" value="Formate/glycerate dehydrogenase catalytic domain-like"/>
    <property type="match status" value="1"/>
</dbReference>
<dbReference type="SUPFAM" id="SSF51735">
    <property type="entry name" value="NAD(P)-binding Rossmann-fold domains"/>
    <property type="match status" value="1"/>
</dbReference>
<dbReference type="PROSITE" id="PS00738">
    <property type="entry name" value="ADOHCYASE_1"/>
    <property type="match status" value="1"/>
</dbReference>
<dbReference type="PROSITE" id="PS00739">
    <property type="entry name" value="ADOHCYASE_2"/>
    <property type="match status" value="1"/>
</dbReference>
<comment type="function">
    <text evidence="2 3">Catalyzes the hydrolysis of S-adenosyl-L-homocysteine to form adenosine and homocysteine (PubMed:10933798). Binds copper ions (By similarity).</text>
</comment>
<comment type="catalytic activity">
    <reaction evidence="3">
        <text>S-adenosyl-L-homocysteine + H2O = L-homocysteine + adenosine</text>
        <dbReference type="Rhea" id="RHEA:21708"/>
        <dbReference type="ChEBI" id="CHEBI:15377"/>
        <dbReference type="ChEBI" id="CHEBI:16335"/>
        <dbReference type="ChEBI" id="CHEBI:57856"/>
        <dbReference type="ChEBI" id="CHEBI:58199"/>
        <dbReference type="EC" id="3.13.2.1"/>
    </reaction>
    <physiologicalReaction direction="left-to-right" evidence="23">
        <dbReference type="Rhea" id="RHEA:21709"/>
    </physiologicalReaction>
</comment>
<comment type="cofactor">
    <cofactor evidence="4 19">
        <name>NAD(+)</name>
        <dbReference type="ChEBI" id="CHEBI:57540"/>
    </cofactor>
    <text evidence="4 19">Binds 1 NAD(+) per subunit.</text>
</comment>
<comment type="pathway">
    <text>Amino-acid biosynthesis; L-homocysteine biosynthesis; L-homocysteine from S-adenosyl-L-homocysteine: step 1/1.</text>
</comment>
<comment type="subunit">
    <text evidence="4 11 16 19">Homotetramer (PubMed:19177456, PubMed:28647132, PubMed:9586999). Interaction with AHCYL1 (PubMed:28647132).</text>
</comment>
<comment type="interaction">
    <interactant intactId="EBI-1053240">
        <id>P23526</id>
    </interactant>
    <interactant intactId="EBI-2838246">
        <id>Q6AI12</id>
        <label>ANKRD40</label>
    </interactant>
    <organismsDiffer>false</organismsDiffer>
    <experiments>10</experiments>
</comment>
<comment type="interaction">
    <interactant intactId="EBI-1053240">
        <id>P23526</id>
    </interactant>
    <interactant intactId="EBI-743771">
        <id>Q92624</id>
        <label>APPBP2</label>
    </interactant>
    <organismsDiffer>false</organismsDiffer>
    <experiments>3</experiments>
</comment>
<comment type="interaction">
    <interactant intactId="EBI-1053240">
        <id>P23526</id>
    </interactant>
    <interactant intactId="EBI-2874661">
        <id>Q9BV19</id>
        <label>C1orf50</label>
    </interactant>
    <organismsDiffer>false</organismsDiffer>
    <experiments>13</experiments>
</comment>
<comment type="subcellular location">
    <subcellularLocation>
        <location evidence="9">Cytoplasm</location>
    </subcellularLocation>
    <subcellularLocation>
        <location evidence="9">Melanosome</location>
    </subcellularLocation>
    <subcellularLocation>
        <location evidence="16">Nucleus</location>
    </subcellularLocation>
    <subcellularLocation>
        <location evidence="16">Endoplasmic reticulum</location>
    </subcellularLocation>
    <text>Identified by mass spectrometry in melanosome fractions from stage I to stage IV.</text>
</comment>
<comment type="alternative products">
    <event type="alternative splicing"/>
    <isoform>
        <id>P23526-1</id>
        <name>1</name>
        <sequence type="displayed"/>
    </isoform>
    <isoform>
        <id>P23526-2</id>
        <name>2</name>
        <sequence type="described" ref="VSP_045404"/>
    </isoform>
</comment>
<comment type="disease" evidence="5 7 8 10 11 12 13 15 16">
    <disease id="DI-01774">
        <name>Hypermethioninemia with S-adenosylhomocysteine hydrolase deficiency</name>
        <acronym>HMAHCHD</acronym>
        <description>A metabolic disorder characterized by hypermethioninemia associated with failure to thrive, mental and motor retardation, facial dysmorphism with abnormal hair and teeth, and myocardiopathy.</description>
        <dbReference type="MIM" id="613752"/>
    </disease>
    <text>The disease is caused by variants affecting the gene represented in this entry.</text>
</comment>
<comment type="similarity">
    <text evidence="22">Belongs to the adenosylhomocysteinase family.</text>
</comment>
<organism>
    <name type="scientific">Homo sapiens</name>
    <name type="common">Human</name>
    <dbReference type="NCBI Taxonomy" id="9606"/>
    <lineage>
        <taxon>Eukaryota</taxon>
        <taxon>Metazoa</taxon>
        <taxon>Chordata</taxon>
        <taxon>Craniata</taxon>
        <taxon>Vertebrata</taxon>
        <taxon>Euteleostomi</taxon>
        <taxon>Mammalia</taxon>
        <taxon>Eutheria</taxon>
        <taxon>Euarchontoglires</taxon>
        <taxon>Primates</taxon>
        <taxon>Haplorrhini</taxon>
        <taxon>Catarrhini</taxon>
        <taxon>Hominidae</taxon>
        <taxon>Homo</taxon>
    </lineage>
</organism>
<name>SAHH_HUMAN</name>
<reference key="1">
    <citation type="journal article" date="1989" name="Ann. Hum. Genet.">
        <title>Sequence of full length cDNA for human S-adenosylhomocysteine hydrolase.</title>
        <authorList>
            <person name="Coulter-Karis D.E."/>
            <person name="Hershfield M.S."/>
        </authorList>
    </citation>
    <scope>NUCLEOTIDE SEQUENCE [MRNA] (ISOFORM 1)</scope>
    <scope>VARIANT ASN-86</scope>
    <source>
        <tissue>Placenta</tissue>
    </source>
</reference>
<reference key="2">
    <citation type="submission" date="2004-10" db="EMBL/GenBank/DDBJ databases">
        <title>Cloning of human full-length CDSs in BD Creator(TM) system donor vector.</title>
        <authorList>
            <person name="Kalnine N."/>
            <person name="Chen X."/>
            <person name="Rolfs A."/>
            <person name="Halleck A."/>
            <person name="Hines L."/>
            <person name="Eisenstein S."/>
            <person name="Koundinya M."/>
            <person name="Raphael J."/>
            <person name="Moreira D."/>
            <person name="Kelley T."/>
            <person name="LaBaer J."/>
            <person name="Lin Y."/>
            <person name="Phelan M."/>
            <person name="Farmer A."/>
        </authorList>
    </citation>
    <scope>NUCLEOTIDE SEQUENCE [LARGE SCALE MRNA] (ISOFORM 1)</scope>
</reference>
<reference key="3">
    <citation type="journal article" date="2004" name="Nat. Genet.">
        <title>Complete sequencing and characterization of 21,243 full-length human cDNAs.</title>
        <authorList>
            <person name="Ota T."/>
            <person name="Suzuki Y."/>
            <person name="Nishikawa T."/>
            <person name="Otsuki T."/>
            <person name="Sugiyama T."/>
            <person name="Irie R."/>
            <person name="Wakamatsu A."/>
            <person name="Hayashi K."/>
            <person name="Sato H."/>
            <person name="Nagai K."/>
            <person name="Kimura K."/>
            <person name="Makita H."/>
            <person name="Sekine M."/>
            <person name="Obayashi M."/>
            <person name="Nishi T."/>
            <person name="Shibahara T."/>
            <person name="Tanaka T."/>
            <person name="Ishii S."/>
            <person name="Yamamoto J."/>
            <person name="Saito K."/>
            <person name="Kawai Y."/>
            <person name="Isono Y."/>
            <person name="Nakamura Y."/>
            <person name="Nagahari K."/>
            <person name="Murakami K."/>
            <person name="Yasuda T."/>
            <person name="Iwayanagi T."/>
            <person name="Wagatsuma M."/>
            <person name="Shiratori A."/>
            <person name="Sudo H."/>
            <person name="Hosoiri T."/>
            <person name="Kaku Y."/>
            <person name="Kodaira H."/>
            <person name="Kondo H."/>
            <person name="Sugawara M."/>
            <person name="Takahashi M."/>
            <person name="Kanda K."/>
            <person name="Yokoi T."/>
            <person name="Furuya T."/>
            <person name="Kikkawa E."/>
            <person name="Omura Y."/>
            <person name="Abe K."/>
            <person name="Kamihara K."/>
            <person name="Katsuta N."/>
            <person name="Sato K."/>
            <person name="Tanikawa M."/>
            <person name="Yamazaki M."/>
            <person name="Ninomiya K."/>
            <person name="Ishibashi T."/>
            <person name="Yamashita H."/>
            <person name="Murakawa K."/>
            <person name="Fujimori K."/>
            <person name="Tanai H."/>
            <person name="Kimata M."/>
            <person name="Watanabe M."/>
            <person name="Hiraoka S."/>
            <person name="Chiba Y."/>
            <person name="Ishida S."/>
            <person name="Ono Y."/>
            <person name="Takiguchi S."/>
            <person name="Watanabe S."/>
            <person name="Yosida M."/>
            <person name="Hotuta T."/>
            <person name="Kusano J."/>
            <person name="Kanehori K."/>
            <person name="Takahashi-Fujii A."/>
            <person name="Hara H."/>
            <person name="Tanase T.-O."/>
            <person name="Nomura Y."/>
            <person name="Togiya S."/>
            <person name="Komai F."/>
            <person name="Hara R."/>
            <person name="Takeuchi K."/>
            <person name="Arita M."/>
            <person name="Imose N."/>
            <person name="Musashino K."/>
            <person name="Yuuki H."/>
            <person name="Oshima A."/>
            <person name="Sasaki N."/>
            <person name="Aotsuka S."/>
            <person name="Yoshikawa Y."/>
            <person name="Matsunawa H."/>
            <person name="Ichihara T."/>
            <person name="Shiohata N."/>
            <person name="Sano S."/>
            <person name="Moriya S."/>
            <person name="Momiyama H."/>
            <person name="Satoh N."/>
            <person name="Takami S."/>
            <person name="Terashima Y."/>
            <person name="Suzuki O."/>
            <person name="Nakagawa S."/>
            <person name="Senoh A."/>
            <person name="Mizoguchi H."/>
            <person name="Goto Y."/>
            <person name="Shimizu F."/>
            <person name="Wakebe H."/>
            <person name="Hishigaki H."/>
            <person name="Watanabe T."/>
            <person name="Sugiyama A."/>
            <person name="Takemoto M."/>
            <person name="Kawakami B."/>
            <person name="Yamazaki M."/>
            <person name="Watanabe K."/>
            <person name="Kumagai A."/>
            <person name="Itakura S."/>
            <person name="Fukuzumi Y."/>
            <person name="Fujimori Y."/>
            <person name="Komiyama M."/>
            <person name="Tashiro H."/>
            <person name="Tanigami A."/>
            <person name="Fujiwara T."/>
            <person name="Ono T."/>
            <person name="Yamada K."/>
            <person name="Fujii Y."/>
            <person name="Ozaki K."/>
            <person name="Hirao M."/>
            <person name="Ohmori Y."/>
            <person name="Kawabata A."/>
            <person name="Hikiji T."/>
            <person name="Kobatake N."/>
            <person name="Inagaki H."/>
            <person name="Ikema Y."/>
            <person name="Okamoto S."/>
            <person name="Okitani R."/>
            <person name="Kawakami T."/>
            <person name="Noguchi S."/>
            <person name="Itoh T."/>
            <person name="Shigeta K."/>
            <person name="Senba T."/>
            <person name="Matsumura K."/>
            <person name="Nakajima Y."/>
            <person name="Mizuno T."/>
            <person name="Morinaga M."/>
            <person name="Sasaki M."/>
            <person name="Togashi T."/>
            <person name="Oyama M."/>
            <person name="Hata H."/>
            <person name="Watanabe M."/>
            <person name="Komatsu T."/>
            <person name="Mizushima-Sugano J."/>
            <person name="Satoh T."/>
            <person name="Shirai Y."/>
            <person name="Takahashi Y."/>
            <person name="Nakagawa K."/>
            <person name="Okumura K."/>
            <person name="Nagase T."/>
            <person name="Nomura N."/>
            <person name="Kikuchi H."/>
            <person name="Masuho Y."/>
            <person name="Yamashita R."/>
            <person name="Nakai K."/>
            <person name="Yada T."/>
            <person name="Nakamura Y."/>
            <person name="Ohara O."/>
            <person name="Isogai T."/>
            <person name="Sugano S."/>
        </authorList>
    </citation>
    <scope>NUCLEOTIDE SEQUENCE [LARGE SCALE MRNA] (ISOFORMS 1 AND 2)</scope>
    <source>
        <tissue>Testis</tissue>
        <tissue>Umbilical cord blood</tissue>
    </source>
</reference>
<reference key="4">
    <citation type="journal article" date="2001" name="Nature">
        <title>The DNA sequence and comparative analysis of human chromosome 20.</title>
        <authorList>
            <person name="Deloukas P."/>
            <person name="Matthews L.H."/>
            <person name="Ashurst J.L."/>
            <person name="Burton J."/>
            <person name="Gilbert J.G.R."/>
            <person name="Jones M."/>
            <person name="Stavrides G."/>
            <person name="Almeida J.P."/>
            <person name="Babbage A.K."/>
            <person name="Bagguley C.L."/>
            <person name="Bailey J."/>
            <person name="Barlow K.F."/>
            <person name="Bates K.N."/>
            <person name="Beard L.M."/>
            <person name="Beare D.M."/>
            <person name="Beasley O.P."/>
            <person name="Bird C.P."/>
            <person name="Blakey S.E."/>
            <person name="Bridgeman A.M."/>
            <person name="Brown A.J."/>
            <person name="Buck D."/>
            <person name="Burrill W.D."/>
            <person name="Butler A.P."/>
            <person name="Carder C."/>
            <person name="Carter N.P."/>
            <person name="Chapman J.C."/>
            <person name="Clamp M."/>
            <person name="Clark G."/>
            <person name="Clark L.N."/>
            <person name="Clark S.Y."/>
            <person name="Clee C.M."/>
            <person name="Clegg S."/>
            <person name="Cobley V.E."/>
            <person name="Collier R.E."/>
            <person name="Connor R.E."/>
            <person name="Corby N.R."/>
            <person name="Coulson A."/>
            <person name="Coville G.J."/>
            <person name="Deadman R."/>
            <person name="Dhami P.D."/>
            <person name="Dunn M."/>
            <person name="Ellington A.G."/>
            <person name="Frankland J.A."/>
            <person name="Fraser A."/>
            <person name="French L."/>
            <person name="Garner P."/>
            <person name="Grafham D.V."/>
            <person name="Griffiths C."/>
            <person name="Griffiths M.N.D."/>
            <person name="Gwilliam R."/>
            <person name="Hall R.E."/>
            <person name="Hammond S."/>
            <person name="Harley J.L."/>
            <person name="Heath P.D."/>
            <person name="Ho S."/>
            <person name="Holden J.L."/>
            <person name="Howden P.J."/>
            <person name="Huckle E."/>
            <person name="Hunt A.R."/>
            <person name="Hunt S.E."/>
            <person name="Jekosch K."/>
            <person name="Johnson C.M."/>
            <person name="Johnson D."/>
            <person name="Kay M.P."/>
            <person name="Kimberley A.M."/>
            <person name="King A."/>
            <person name="Knights A."/>
            <person name="Laird G.K."/>
            <person name="Lawlor S."/>
            <person name="Lehvaeslaiho M.H."/>
            <person name="Leversha M.A."/>
            <person name="Lloyd C."/>
            <person name="Lloyd D.M."/>
            <person name="Lovell J.D."/>
            <person name="Marsh V.L."/>
            <person name="Martin S.L."/>
            <person name="McConnachie L.J."/>
            <person name="McLay K."/>
            <person name="McMurray A.A."/>
            <person name="Milne S.A."/>
            <person name="Mistry D."/>
            <person name="Moore M.J.F."/>
            <person name="Mullikin J.C."/>
            <person name="Nickerson T."/>
            <person name="Oliver K."/>
            <person name="Parker A."/>
            <person name="Patel R."/>
            <person name="Pearce T.A.V."/>
            <person name="Peck A.I."/>
            <person name="Phillimore B.J.C.T."/>
            <person name="Prathalingam S.R."/>
            <person name="Plumb R.W."/>
            <person name="Ramsay H."/>
            <person name="Rice C.M."/>
            <person name="Ross M.T."/>
            <person name="Scott C.E."/>
            <person name="Sehra H.K."/>
            <person name="Shownkeen R."/>
            <person name="Sims S."/>
            <person name="Skuce C.D."/>
            <person name="Smith M.L."/>
            <person name="Soderlund C."/>
            <person name="Steward C.A."/>
            <person name="Sulston J.E."/>
            <person name="Swann R.M."/>
            <person name="Sycamore N."/>
            <person name="Taylor R."/>
            <person name="Tee L."/>
            <person name="Thomas D.W."/>
            <person name="Thorpe A."/>
            <person name="Tracey A."/>
            <person name="Tromans A.C."/>
            <person name="Vaudin M."/>
            <person name="Wall M."/>
            <person name="Wallis J.M."/>
            <person name="Whitehead S.L."/>
            <person name="Whittaker P."/>
            <person name="Willey D.L."/>
            <person name="Williams L."/>
            <person name="Williams S.A."/>
            <person name="Wilming L."/>
            <person name="Wray P.W."/>
            <person name="Hubbard T."/>
            <person name="Durbin R.M."/>
            <person name="Bentley D.R."/>
            <person name="Beck S."/>
            <person name="Rogers J."/>
        </authorList>
    </citation>
    <scope>NUCLEOTIDE SEQUENCE [LARGE SCALE GENOMIC DNA]</scope>
</reference>
<reference key="5">
    <citation type="submission" date="2005-09" db="EMBL/GenBank/DDBJ databases">
        <authorList>
            <person name="Mural R.J."/>
            <person name="Istrail S."/>
            <person name="Sutton G.G."/>
            <person name="Florea L."/>
            <person name="Halpern A.L."/>
            <person name="Mobarry C.M."/>
            <person name="Lippert R."/>
            <person name="Walenz B."/>
            <person name="Shatkay H."/>
            <person name="Dew I."/>
            <person name="Miller J.R."/>
            <person name="Flanigan M.J."/>
            <person name="Edwards N.J."/>
            <person name="Bolanos R."/>
            <person name="Fasulo D."/>
            <person name="Halldorsson B.V."/>
            <person name="Hannenhalli S."/>
            <person name="Turner R."/>
            <person name="Yooseph S."/>
            <person name="Lu F."/>
            <person name="Nusskern D.R."/>
            <person name="Shue B.C."/>
            <person name="Zheng X.H."/>
            <person name="Zhong F."/>
            <person name="Delcher A.L."/>
            <person name="Huson D.H."/>
            <person name="Kravitz S.A."/>
            <person name="Mouchard L."/>
            <person name="Reinert K."/>
            <person name="Remington K.A."/>
            <person name="Clark A.G."/>
            <person name="Waterman M.S."/>
            <person name="Eichler E.E."/>
            <person name="Adams M.D."/>
            <person name="Hunkapiller M.W."/>
            <person name="Myers E.W."/>
            <person name="Venter J.C."/>
        </authorList>
    </citation>
    <scope>NUCLEOTIDE SEQUENCE [LARGE SCALE GENOMIC DNA]</scope>
</reference>
<reference key="6">
    <citation type="journal article" date="2004" name="Genome Res.">
        <title>The status, quality, and expansion of the NIH full-length cDNA project: the Mammalian Gene Collection (MGC).</title>
        <authorList>
            <consortium name="The MGC Project Team"/>
        </authorList>
    </citation>
    <scope>NUCLEOTIDE SEQUENCE [LARGE SCALE MRNA] (ISOFORM 1)</scope>
    <source>
        <tissue>Placenta</tissue>
        <tissue>Skin</tissue>
    </source>
</reference>
<reference key="7">
    <citation type="journal article" date="1995" name="Arch. Biochem. Biophys.">
        <title>Limited proteolysis of S-adenosylhomocysteine hydrolase: implications for the three-dimensional structure.</title>
        <authorList>
            <person name="Gupta R.A."/>
            <person name="Yuan C.-S."/>
            <person name="Ault-Riche D.B."/>
            <person name="Borchardt R.T."/>
        </authorList>
    </citation>
    <scope>PROTEIN SEQUENCE OF 2-6; 104-108 AND 198-202</scope>
</reference>
<reference key="8">
    <citation type="submission" date="2008-03" db="UniProtKB">
        <authorList>
            <person name="Bienvenut W.V."/>
            <person name="Heiserich L."/>
            <person name="Gottlieb E."/>
        </authorList>
    </citation>
    <scope>PROTEIN SEQUENCE OF 2-34; 95-103; 143-186; 215-226; 336-343 AND 389-405</scope>
    <scope>CLEAVAGE OF INITIATOR METHIONINE</scope>
    <scope>ACETYLATION AT SER-2</scope>
    <scope>IDENTIFICATION BY MASS SPECTROMETRY</scope>
    <source>
        <tissue>Colon carcinoma</tissue>
    </source>
</reference>
<reference key="9">
    <citation type="journal article" date="1989" name="Ann. Hum. Genet.">
        <title>Isozyme and DNA analysis of human S-adenosyl-L-homocysteine hydrolase (AHCY).</title>
        <authorList>
            <person name="Arredondo-Vega F.X."/>
            <person name="Charlton J.A."/>
            <person name="Edwards Y.H."/>
            <person name="Hopkinson D.A."/>
            <person name="Whitehouse D.B."/>
        </authorList>
    </citation>
    <scope>NUCLEOTIDE SEQUENCE [MRNA] OF 122-432 (ISOFORM 1)</scope>
    <source>
        <tissue>Placenta</tissue>
    </source>
</reference>
<reference key="10">
    <citation type="journal article" date="1995" name="J. Biol. Chem.">
        <title>Photoaffinity labeling of human placental S-adenosylhomocysteine hydrolase with [2-3H]8-azido-adenosine.</title>
        <authorList>
            <person name="Yuan C.S."/>
            <person name="Borchardt R.T."/>
        </authorList>
    </citation>
    <scope>PROTEIN SEQUENCE OF 175-186 AND 319-327</scope>
</reference>
<reference key="11">
    <citation type="journal article" date="2000" name="Biochemistry">
        <title>Substrate binding stabilizes S-adenosylhomocysteine hydrolase in a closed conformation.</title>
        <authorList>
            <person name="Yin D."/>
            <person name="Yang X."/>
            <person name="Hu Y."/>
            <person name="Kuczera K."/>
            <person name="Schowen R.L."/>
            <person name="Borchardt R.T."/>
            <person name="Squier T.C."/>
        </authorList>
    </citation>
    <scope>FUNCTION</scope>
    <scope>CATALYTIC ACTIVITY</scope>
</reference>
<reference key="12">
    <citation type="journal article" date="2006" name="J. Proteome Res.">
        <title>Proteomic and bioinformatic characterization of the biogenesis and function of melanosomes.</title>
        <authorList>
            <person name="Chi A."/>
            <person name="Valencia J.C."/>
            <person name="Hu Z.-Z."/>
            <person name="Watabe H."/>
            <person name="Yamaguchi H."/>
            <person name="Mangini N.J."/>
            <person name="Huang H."/>
            <person name="Canfield V.A."/>
            <person name="Cheng K.C."/>
            <person name="Yang F."/>
            <person name="Abe R."/>
            <person name="Yamagishi S."/>
            <person name="Shabanowitz J."/>
            <person name="Hearing V.J."/>
            <person name="Wu C."/>
            <person name="Appella E."/>
            <person name="Hunt D.F."/>
        </authorList>
    </citation>
    <scope>SUBCELLULAR LOCATION [LARGE SCALE ANALYSIS]</scope>
    <source>
        <tissue>Melanoma</tissue>
    </source>
</reference>
<reference key="13">
    <citation type="journal article" date="2011" name="BMC Syst. Biol.">
        <title>Initial characterization of the human central proteome.</title>
        <authorList>
            <person name="Burkard T.R."/>
            <person name="Planyavsky M."/>
            <person name="Kaupe I."/>
            <person name="Breitwieser F.P."/>
            <person name="Buerckstuemmer T."/>
            <person name="Bennett K.L."/>
            <person name="Superti-Furga G."/>
            <person name="Colinge J."/>
        </authorList>
    </citation>
    <scope>IDENTIFICATION BY MASS SPECTROMETRY [LARGE SCALE ANALYSIS]</scope>
</reference>
<reference key="14">
    <citation type="journal article" date="2013" name="J. Proteome Res.">
        <title>Toward a comprehensive characterization of a human cancer cell phosphoproteome.</title>
        <authorList>
            <person name="Zhou H."/>
            <person name="Di Palma S."/>
            <person name="Preisinger C."/>
            <person name="Peng M."/>
            <person name="Polat A.N."/>
            <person name="Heck A.J."/>
            <person name="Mohammed S."/>
        </authorList>
    </citation>
    <scope>PHOSPHORYLATION [LARGE SCALE ANALYSIS] AT SER-183</scope>
    <scope>IDENTIFICATION BY MASS SPECTROMETRY [LARGE SCALE ANALYSIS]</scope>
    <source>
        <tissue>Erythroleukemia</tissue>
    </source>
</reference>
<reference key="15">
    <citation type="journal article" date="2014" name="J. Proteomics">
        <title>An enzyme assisted RP-RPLC approach for in-depth analysis of human liver phosphoproteome.</title>
        <authorList>
            <person name="Bian Y."/>
            <person name="Song C."/>
            <person name="Cheng K."/>
            <person name="Dong M."/>
            <person name="Wang F."/>
            <person name="Huang J."/>
            <person name="Sun D."/>
            <person name="Wang L."/>
            <person name="Ye M."/>
            <person name="Zou H."/>
        </authorList>
    </citation>
    <scope>IDENTIFICATION BY MASS SPECTROMETRY [LARGE SCALE ANALYSIS]</scope>
    <source>
        <tissue>Liver</tissue>
    </source>
</reference>
<reference key="16">
    <citation type="journal article" date="2018" name="Cell Res.">
        <title>Landscape of the regulatory elements for lysine 2-hydroxyisobutyrylation pathway.</title>
        <authorList>
            <person name="Huang H."/>
            <person name="Luo Z."/>
            <person name="Qi S."/>
            <person name="Huang J."/>
            <person name="Xu P."/>
            <person name="Wang X."/>
            <person name="Gao L."/>
            <person name="Li F."/>
            <person name="Wang J."/>
            <person name="Zhao W."/>
            <person name="Gu W."/>
            <person name="Chen Z."/>
            <person name="Dai L."/>
            <person name="Dai J."/>
            <person name="Zhao Y."/>
        </authorList>
    </citation>
    <scope>HYDROXYBUTYRYLATION AT LYS-186</scope>
</reference>
<reference key="17">
    <citation type="journal article" date="1998" name="Nat. Struct. Biol.">
        <title>Structure determination of selenomethionyl S-adenosylhomocysteine hydrolase using data at a single wavelength.</title>
        <authorList>
            <person name="Turner M.A."/>
            <person name="Yuan C.S."/>
            <person name="Borchardt R.T."/>
            <person name="Hershfield M.S."/>
            <person name="Smith G.D."/>
            <person name="Howell P.L."/>
        </authorList>
    </citation>
    <scope>X-RAY CRYSTALLOGRAPHY (2.8 ANGSTROMS) IN COMPLEX WITH NAD AND ADENOSINE ANALOG</scope>
    <scope>SUBUNIT</scope>
    <scope>COFACTOR</scope>
    <source>
        <tissue>Placenta</tissue>
    </source>
</reference>
<reference key="18">
    <citation type="journal article" date="2003" name="Biochemistry">
        <title>Catalytic strategy of S-adenosyl-L-homocysteine hydrolase: transition-state stabilization and the avoidance of abortive reactions.</title>
        <authorList>
            <person name="Yang X."/>
            <person name="Hu Y."/>
            <person name="Yin D.H."/>
            <person name="Turner M.A."/>
            <person name="Wang M."/>
            <person name="Borchardt R.T."/>
            <person name="Howell P.L."/>
            <person name="Kuczera K."/>
            <person name="Schowen R.L."/>
        </authorList>
    </citation>
    <scope>X-RAY CRYSTALLOGRAPHY (2.01 ANGSTROMS) IN COMPLEX WITH NAD AND NEPLANOCIN A</scope>
    <scope>COFACTOR</scope>
</reference>
<reference key="19">
    <citation type="journal article" date="2004" name="Eur. J. Hum. Genet.">
        <title>Effect of genetic variation in the human S-adenosylhomocysteine hydrolase gene on total homocysteine concentrations and risk of recurrent venous thrombosis.</title>
        <authorList>
            <person name="Gellekink H."/>
            <person name="den Heijer M."/>
            <person name="Kluijtmans L.A."/>
            <person name="Blom H.J."/>
        </authorList>
    </citation>
    <scope>VARIANT TRP-38</scope>
</reference>
<reference key="20">
    <citation type="journal article" date="2004" name="Proc. Natl. Acad. Sci. U.S.A.">
        <title>S-adenosylhomocysteine hydrolase deficiency in a human: a genetic disorder of methionine metabolism.</title>
        <authorList>
            <person name="Baric I."/>
            <person name="Fumic K."/>
            <person name="Glenn B."/>
            <person name="Cuk M."/>
            <person name="Schulze A."/>
            <person name="Finkelstein J.D."/>
            <person name="James S.J."/>
            <person name="Mejaski-Bosnjak V."/>
            <person name="Pazanin L."/>
            <person name="Pogribny I.P."/>
            <person name="Rados M."/>
            <person name="Sarnavka V."/>
            <person name="Scukanec-Spoljar M."/>
            <person name="Allen R.H."/>
            <person name="Stabler S."/>
            <person name="Uzelac L."/>
            <person name="Vugrek O."/>
            <person name="Wagner C."/>
            <person name="Zeisel S."/>
            <person name="Mudd S.H."/>
        </authorList>
    </citation>
    <scope>VARIANTS HMAHCHD 112-TRP--TYR-432 DEL AND CYS-143</scope>
</reference>
<reference key="21">
    <citation type="journal article" date="2006" name="Biochem. J.">
        <title>A single mutation at Tyr143 of human S-adenosylhomocysteine hydrolase renders the enzyme thermosensitive and affects the oxidation state of bound cofactor nicotinamide-adenine dinucleotide.</title>
        <authorList>
            <person name="Beluzic R."/>
            <person name="Cuk M."/>
            <person name="Pavkov T."/>
            <person name="Fumic K."/>
            <person name="Baric I."/>
            <person name="Mudd S.H."/>
            <person name="Jurak I."/>
            <person name="Vugrek O."/>
        </authorList>
    </citation>
    <scope>CHARACTERIZATION OF VARIANTS HMAHCHD 112-TRP--TYR-432 DEL AND CYS-143</scope>
    <scope>MUTAGENESIS OF GLU-115</scope>
</reference>
<reference key="22">
    <citation type="journal article" date="2006" name="J. Inherit. Metab. Dis.">
        <title>S-adenosylhomocysteine hydrolase deficiency in a 26-year-old man.</title>
        <authorList>
            <person name="Buist N.R."/>
            <person name="Glenn B."/>
            <person name="Vugrek O."/>
            <person name="Wagner C."/>
            <person name="Stabler S."/>
            <person name="Allen R.H."/>
            <person name="Pogribny I."/>
            <person name="Schulze A."/>
            <person name="Zeisel S.H."/>
            <person name="Baric I."/>
            <person name="Mudd S.H."/>
        </authorList>
    </citation>
    <scope>VARIANTS HMAHCHD VAL-89 AND CYS-143</scope>
</reference>
<reference key="23">
    <citation type="journal article" date="2008" name="Biochem. Biophys. Res. Commun.">
        <title>S-Adenosylhomocysteine hydrolase (AdoHcyase) deficiency: enzymatic capabilities of human AdoHcyase are highly effected by changes to codon 89 and its surrounding residues.</title>
        <authorList>
            <person name="Beluzic R."/>
            <person name="Cuk M."/>
            <person name="Pavkov T."/>
            <person name="Baric I."/>
            <person name="Vugrek O."/>
        </authorList>
    </citation>
    <scope>CHARACTERIZATION OF VARIANT HMAHCHD VAL-89</scope>
    <scope>MUTAGENESIS OF THR-84 AND ALA-89</scope>
</reference>
<reference key="24">
    <citation type="journal article" date="2009" name="Hum. Mutat.">
        <title>S-adenosylhomocysteine hydrolase (AHCY) deficiency: two novel mutations with lethal outcome.</title>
        <authorList>
            <person name="Vugrek O."/>
            <person name="Beluzic R."/>
            <person name="Nakic N."/>
            <person name="Mudd S.H."/>
        </authorList>
    </citation>
    <scope>VARIANTS HMAHCHD CYS-49 AND GLY-86</scope>
    <scope>SUBUNIT</scope>
    <scope>CHARACTERIZATION OF VARIANTS HMAHCHD CYS-49 AND GLY-86</scope>
</reference>
<reference key="25">
    <citation type="journal article" date="2010" name="J. Inherit. Metab. Dis.">
        <title>S-adenosylhomocysteine hydrolase deficiency: two siblings with fetal hydrops and fatal outcomes.</title>
        <authorList>
            <person name="Grubbs R."/>
            <person name="Vugrek O."/>
            <person name="Deisch J."/>
            <person name="Wagner C."/>
            <person name="Stabler S."/>
            <person name="Allen R."/>
            <person name="Baric I."/>
            <person name="Rados M."/>
            <person name="Mudd S.H."/>
        </authorList>
    </citation>
    <scope>VARIANTS HMAHCHD CYS-49 AND GLY-86</scope>
</reference>
<reference key="26">
    <citation type="journal article" date="2012" name="Mol. Genet. Metab.">
        <title>Clinical picture of S-adenosylhomocysteine hydrolase deficiency resembles phosphomannomutase 2 deficiency.</title>
        <authorList>
            <person name="Honzik T."/>
            <person name="Magner M."/>
            <person name="Krijt J."/>
            <person name="Sokolova J."/>
            <person name="Vugrek O."/>
            <person name="Beluzic R."/>
            <person name="Baric I."/>
            <person name="Hansikova H."/>
            <person name="Elleder M."/>
            <person name="Vesela K."/>
            <person name="Bauerova L."/>
            <person name="Ondruskova N."/>
            <person name="Jesina P."/>
            <person name="Zeman J."/>
            <person name="Kozich V."/>
        </authorList>
    </citation>
    <scope>VARIANTS HMAHCHD CYS-49 AND SER-71</scope>
</reference>
<reference key="27">
    <citation type="journal article" date="2015" name="Mol. Genet. Metab.">
        <title>Liver transplantation for treatment of severe S-adenosylhomocysteine hydrolase deficiency.</title>
        <authorList>
            <person name="Strauss K.A."/>
            <person name="Ferreira C."/>
            <person name="Bottiglieri T."/>
            <person name="Zhao X."/>
            <person name="Arning E."/>
            <person name="Zhang S."/>
            <person name="Zeisel S.H."/>
            <person name="Escolar M.L."/>
            <person name="Presnick N."/>
            <person name="Puffenberger E.G."/>
            <person name="Vugrek O."/>
            <person name="Kovacevic L."/>
            <person name="Wagner C."/>
            <person name="Mazariegos G.V."/>
            <person name="Mudd S.H."/>
            <person name="Soltys K."/>
        </authorList>
    </citation>
    <scope>VARIANTS HMAHCHD CYS-143 AND ASP-328</scope>
</reference>
<reference key="28">
    <citation type="journal article" date="2017" name="Eur. J. Cell Biol.">
        <title>Mutations in S-adenosylhomocysteine hydrolase (AHCY) affect its nucleocytoplasmic distribution and capability to interact with S-adenosylhomocysteine hydrolase-like 1 protein.</title>
        <authorList>
            <person name="Grbesa I."/>
            <person name="Kalo A."/>
            <person name="Beluzic R."/>
            <person name="Kovacevic L."/>
            <person name="Lepur A."/>
            <person name="Rokic F."/>
            <person name="Hochberg H."/>
            <person name="Kanter I."/>
            <person name="Simunovic V."/>
            <person name="Munoz-Torres P.M."/>
            <person name="Shav-Tal Y."/>
            <person name="Vugrek O."/>
        </authorList>
    </citation>
    <scope>CHARACTERIZATION OF VARIANTS HMAHCHD CYS-49; SER-71; GLY-86; VAL-89; CYS-143 AND ASP-328</scope>
    <scope>MUTAGENESIS OF 1-MET--MET-127; TYR-7 AND 365-GLN--TYR-432</scope>
    <scope>SUBCELLULAR LOCATION</scope>
    <scope>INTERACTION WITH AHCYL1</scope>
</reference>
<accession>P23526</accession>
<accession>A8K307</accession>
<accession>B3KUN3</accession>
<accession>E1P5P2</accession>
<accession>F5H737</accession>
<accession>Q96A36</accession>
<evidence type="ECO:0000250" key="1">
    <source>
        <dbReference type="UniProtKB" id="P10760"/>
    </source>
</evidence>
<evidence type="ECO:0000250" key="2">
    <source>
        <dbReference type="UniProtKB" id="P50247"/>
    </source>
</evidence>
<evidence type="ECO:0000269" key="3">
    <source>
    </source>
</evidence>
<evidence type="ECO:0000269" key="4">
    <source>
    </source>
</evidence>
<evidence type="ECO:0000269" key="5">
    <source>
    </source>
</evidence>
<evidence type="ECO:0000269" key="6">
    <source>
    </source>
</evidence>
<evidence type="ECO:0000269" key="7">
    <source>
    </source>
</evidence>
<evidence type="ECO:0000269" key="8">
    <source>
    </source>
</evidence>
<evidence type="ECO:0000269" key="9">
    <source>
    </source>
</evidence>
<evidence type="ECO:0000269" key="10">
    <source>
    </source>
</evidence>
<evidence type="ECO:0000269" key="11">
    <source>
    </source>
</evidence>
<evidence type="ECO:0000269" key="12">
    <source>
    </source>
</evidence>
<evidence type="ECO:0000269" key="13">
    <source>
    </source>
</evidence>
<evidence type="ECO:0000269" key="14">
    <source>
    </source>
</evidence>
<evidence type="ECO:0000269" key="15">
    <source>
    </source>
</evidence>
<evidence type="ECO:0000269" key="16">
    <source>
    </source>
</evidence>
<evidence type="ECO:0000269" key="17">
    <source>
    </source>
</evidence>
<evidence type="ECO:0000269" key="18">
    <source>
    </source>
</evidence>
<evidence type="ECO:0000269" key="19">
    <source>
    </source>
</evidence>
<evidence type="ECO:0000269" key="20">
    <source ref="8"/>
</evidence>
<evidence type="ECO:0000303" key="21">
    <source>
    </source>
</evidence>
<evidence type="ECO:0000305" key="22"/>
<evidence type="ECO:0000305" key="23">
    <source>
    </source>
</evidence>
<evidence type="ECO:0007744" key="24">
    <source>
    </source>
</evidence>
<evidence type="ECO:0007829" key="25">
    <source>
        <dbReference type="PDB" id="1LI4"/>
    </source>
</evidence>
<evidence type="ECO:0007829" key="26">
    <source>
        <dbReference type="PDB" id="3NJ4"/>
    </source>
</evidence>
<evidence type="ECO:0007829" key="27">
    <source>
        <dbReference type="PDB" id="5W49"/>
    </source>
</evidence>